<organism>
    <name type="scientific">Ureaplasma urealyticum serovar 10 (strain ATCC 33699 / Western)</name>
    <dbReference type="NCBI Taxonomy" id="565575"/>
    <lineage>
        <taxon>Bacteria</taxon>
        <taxon>Bacillati</taxon>
        <taxon>Mycoplasmatota</taxon>
        <taxon>Mycoplasmoidales</taxon>
        <taxon>Mycoplasmoidaceae</taxon>
        <taxon>Ureaplasma</taxon>
    </lineage>
</organism>
<sequence length="614" mass="69112">MKKYDVIVIGAGHAGLEAAFATSNLNLQTALITLDEKGIGMMPCNPSIGGPAKGIVTREIDALGGIQGKAADATTMQMKILNSSKGPGVWAIRAQIDKIAYQRWFKQQIKQQKNLDLIIAEVSDLLVENNIVKGVILSDQKIIQADYVIITTGTYLKSITHRGSVCVDEGADGTKNAKFLSDVLVKLGFELIRLKTGTPARIKKDSIDFTNMVLEPGTNQKIAFSHYHPVYKPYDKQLPCHIIYTNEQTHQIIRENLNKSAMYGGMISGIGPRYCPSIEDKIVKFSEKPRHQIFVEPESYELDSMYLGGFSTSMPIDVQEKMIRSLPGLEDCEILKYAYAIEYDAIDPTQLYPSLESKLVNNLFFAGQINGTSGYEEAAAQGLMAAINVSQKHKNKEPIVLGRDQAYIGVMIDDIVTKGVVEPYRLLTSRAEHRLALRNDNADDRLMKIGFEIGLLKPEVYDQYLNNLKQINEVLNWLKTTTVGQIDDLKFTTLKTNSYLIDYLKRPEVKLNDLLIYCPIKIEDEQIINKVQIQVKFEGYIKNQEENLKQLKRLNNIKLHGIVDYKEVPNISLETIDKLNKIKPLDLEQASRISGVNLTDIAMIKYYLERIKND</sequence>
<gene>
    <name evidence="1" type="primary">mnmG</name>
    <name evidence="1" type="synonym">gidA</name>
    <name type="ordered locus">UUR10_0043</name>
</gene>
<accession>B5ZAL6</accession>
<dbReference type="EMBL" id="CP001184">
    <property type="protein sequence ID" value="ACI59879.1"/>
    <property type="molecule type" value="Genomic_DNA"/>
</dbReference>
<dbReference type="RefSeq" id="WP_004025657.1">
    <property type="nucleotide sequence ID" value="NC_011374.1"/>
</dbReference>
<dbReference type="SMR" id="B5ZAL6"/>
<dbReference type="STRING" id="565575.UUR10_0043"/>
<dbReference type="GeneID" id="93848531"/>
<dbReference type="KEGG" id="uue:UUR10_0043"/>
<dbReference type="eggNOG" id="COG0445">
    <property type="taxonomic scope" value="Bacteria"/>
</dbReference>
<dbReference type="HOGENOM" id="CLU_007831_2_2_14"/>
<dbReference type="OrthoDB" id="9815560at2"/>
<dbReference type="Proteomes" id="UP000002018">
    <property type="component" value="Chromosome"/>
</dbReference>
<dbReference type="GO" id="GO:0005829">
    <property type="term" value="C:cytosol"/>
    <property type="evidence" value="ECO:0007669"/>
    <property type="project" value="TreeGrafter"/>
</dbReference>
<dbReference type="GO" id="GO:0050660">
    <property type="term" value="F:flavin adenine dinucleotide binding"/>
    <property type="evidence" value="ECO:0007669"/>
    <property type="project" value="UniProtKB-UniRule"/>
</dbReference>
<dbReference type="GO" id="GO:0030488">
    <property type="term" value="P:tRNA methylation"/>
    <property type="evidence" value="ECO:0007669"/>
    <property type="project" value="TreeGrafter"/>
</dbReference>
<dbReference type="GO" id="GO:0002098">
    <property type="term" value="P:tRNA wobble uridine modification"/>
    <property type="evidence" value="ECO:0007669"/>
    <property type="project" value="InterPro"/>
</dbReference>
<dbReference type="FunFam" id="3.50.50.60:FF:000002">
    <property type="entry name" value="tRNA uridine 5-carboxymethylaminomethyl modification enzyme MnmG"/>
    <property type="match status" value="1"/>
</dbReference>
<dbReference type="Gene3D" id="3.50.50.60">
    <property type="entry name" value="FAD/NAD(P)-binding domain"/>
    <property type="match status" value="2"/>
</dbReference>
<dbReference type="Gene3D" id="1.10.150.570">
    <property type="entry name" value="GidA associated domain, C-terminal subdomain"/>
    <property type="match status" value="1"/>
</dbReference>
<dbReference type="Gene3D" id="1.10.10.1800">
    <property type="entry name" value="tRNA uridine 5-carboxymethylaminomethyl modification enzyme MnmG/GidA"/>
    <property type="match status" value="1"/>
</dbReference>
<dbReference type="HAMAP" id="MF_00129">
    <property type="entry name" value="MnmG_GidA"/>
    <property type="match status" value="1"/>
</dbReference>
<dbReference type="InterPro" id="IPR036188">
    <property type="entry name" value="FAD/NAD-bd_sf"/>
</dbReference>
<dbReference type="InterPro" id="IPR049312">
    <property type="entry name" value="GIDA_C_N"/>
</dbReference>
<dbReference type="InterPro" id="IPR004416">
    <property type="entry name" value="MnmG"/>
</dbReference>
<dbReference type="InterPro" id="IPR002218">
    <property type="entry name" value="MnmG-rel"/>
</dbReference>
<dbReference type="InterPro" id="IPR020595">
    <property type="entry name" value="MnmG-rel_CS"/>
</dbReference>
<dbReference type="InterPro" id="IPR026904">
    <property type="entry name" value="MnmG_C"/>
</dbReference>
<dbReference type="InterPro" id="IPR047001">
    <property type="entry name" value="MnmG_C_subdom"/>
</dbReference>
<dbReference type="InterPro" id="IPR044920">
    <property type="entry name" value="MnmG_C_subdom_sf"/>
</dbReference>
<dbReference type="InterPro" id="IPR040131">
    <property type="entry name" value="MnmG_N"/>
</dbReference>
<dbReference type="NCBIfam" id="TIGR00136">
    <property type="entry name" value="mnmG_gidA"/>
    <property type="match status" value="1"/>
</dbReference>
<dbReference type="PANTHER" id="PTHR11806">
    <property type="entry name" value="GLUCOSE INHIBITED DIVISION PROTEIN A"/>
    <property type="match status" value="1"/>
</dbReference>
<dbReference type="PANTHER" id="PTHR11806:SF0">
    <property type="entry name" value="PROTEIN MTO1 HOMOLOG, MITOCHONDRIAL"/>
    <property type="match status" value="1"/>
</dbReference>
<dbReference type="Pfam" id="PF01134">
    <property type="entry name" value="GIDA"/>
    <property type="match status" value="1"/>
</dbReference>
<dbReference type="Pfam" id="PF21680">
    <property type="entry name" value="GIDA_C_1st"/>
    <property type="match status" value="1"/>
</dbReference>
<dbReference type="Pfam" id="PF13932">
    <property type="entry name" value="SAM_GIDA_C"/>
    <property type="match status" value="1"/>
</dbReference>
<dbReference type="SMART" id="SM01228">
    <property type="entry name" value="GIDA_assoc_3"/>
    <property type="match status" value="1"/>
</dbReference>
<dbReference type="SUPFAM" id="SSF51905">
    <property type="entry name" value="FAD/NAD(P)-binding domain"/>
    <property type="match status" value="1"/>
</dbReference>
<dbReference type="PROSITE" id="PS01280">
    <property type="entry name" value="GIDA_1"/>
    <property type="match status" value="1"/>
</dbReference>
<dbReference type="PROSITE" id="PS01281">
    <property type="entry name" value="GIDA_2"/>
    <property type="match status" value="1"/>
</dbReference>
<protein>
    <recommendedName>
        <fullName evidence="1">tRNA uridine 5-carboxymethylaminomethyl modification enzyme MnmG</fullName>
    </recommendedName>
    <alternativeName>
        <fullName evidence="1">Glucose-inhibited division protein A</fullName>
    </alternativeName>
</protein>
<comment type="function">
    <text evidence="1">NAD-binding protein involved in the addition of a carboxymethylaminomethyl (cmnm) group at the wobble position (U34) of certain tRNAs, forming tRNA-cmnm(5)s(2)U34.</text>
</comment>
<comment type="cofactor">
    <cofactor evidence="1">
        <name>FAD</name>
        <dbReference type="ChEBI" id="CHEBI:57692"/>
    </cofactor>
</comment>
<comment type="subunit">
    <text evidence="1">Homodimer. Heterotetramer of two MnmE and two MnmG subunits.</text>
</comment>
<comment type="subcellular location">
    <subcellularLocation>
        <location evidence="1">Cytoplasm</location>
    </subcellularLocation>
</comment>
<comment type="similarity">
    <text evidence="1">Belongs to the MnmG family.</text>
</comment>
<proteinExistence type="inferred from homology"/>
<reference key="1">
    <citation type="submission" date="2008-10" db="EMBL/GenBank/DDBJ databases">
        <title>Genome sequence of Ureaplasma urealyticum serovar 10 ATCC-33699.</title>
        <authorList>
            <person name="Shrivastava S."/>
            <person name="Methe B.A."/>
            <person name="Glass J."/>
            <person name="White K."/>
            <person name="Duffy L.B."/>
        </authorList>
    </citation>
    <scope>NUCLEOTIDE SEQUENCE [LARGE SCALE GENOMIC DNA]</scope>
    <source>
        <strain>ATCC 33699 / Western</strain>
    </source>
</reference>
<name>MNMG_UREU1</name>
<keyword id="KW-0963">Cytoplasm</keyword>
<keyword id="KW-0274">FAD</keyword>
<keyword id="KW-0285">Flavoprotein</keyword>
<keyword id="KW-0520">NAD</keyword>
<keyword id="KW-0819">tRNA processing</keyword>
<feature type="chain" id="PRO_1000095669" description="tRNA uridine 5-carboxymethylaminomethyl modification enzyme MnmG">
    <location>
        <begin position="1"/>
        <end position="614"/>
    </location>
</feature>
<feature type="binding site" evidence="1">
    <location>
        <begin position="10"/>
        <end position="15"/>
    </location>
    <ligand>
        <name>FAD</name>
        <dbReference type="ChEBI" id="CHEBI:57692"/>
    </ligand>
</feature>
<feature type="binding site" evidence="1">
    <location>
        <begin position="271"/>
        <end position="285"/>
    </location>
    <ligand>
        <name>NAD(+)</name>
        <dbReference type="ChEBI" id="CHEBI:57540"/>
    </ligand>
</feature>
<evidence type="ECO:0000255" key="1">
    <source>
        <dbReference type="HAMAP-Rule" id="MF_00129"/>
    </source>
</evidence>